<gene>
    <name type="ordered locus">stu0306/stu0307</name>
</gene>
<organism>
    <name type="scientific">Streptococcus thermophilus (strain ATCC BAA-250 / LMG 18311)</name>
    <dbReference type="NCBI Taxonomy" id="264199"/>
    <lineage>
        <taxon>Bacteria</taxon>
        <taxon>Bacillati</taxon>
        <taxon>Bacillota</taxon>
        <taxon>Bacilli</taxon>
        <taxon>Lactobacillales</taxon>
        <taxon>Streptococcaceae</taxon>
        <taxon>Streptococcus</taxon>
    </lineage>
</organism>
<dbReference type="EMBL" id="CP000023">
    <property type="protein sequence ID" value="AAV60028.1"/>
    <property type="status" value="ALT_SEQ"/>
    <property type="molecule type" value="Genomic_DNA"/>
</dbReference>
<dbReference type="EMBL" id="CP000023">
    <property type="protein sequence ID" value="AAV60029.1"/>
    <property type="status" value="ALT_SEQ"/>
    <property type="molecule type" value="Genomic_DNA"/>
</dbReference>
<dbReference type="STRING" id="264199.stu0307"/>
<dbReference type="KEGG" id="stl:stu0306"/>
<dbReference type="KEGG" id="stl:stu0307"/>
<dbReference type="eggNOG" id="COG4720">
    <property type="taxonomic scope" value="Bacteria"/>
</dbReference>
<dbReference type="HOGENOM" id="CLU_2810779_0_0_9"/>
<dbReference type="Proteomes" id="UP000001170">
    <property type="component" value="Chromosome"/>
</dbReference>
<dbReference type="GO" id="GO:0005886">
    <property type="term" value="C:plasma membrane"/>
    <property type="evidence" value="ECO:0007669"/>
    <property type="project" value="UniProtKB-SubCell"/>
</dbReference>
<dbReference type="Gene3D" id="1.10.1760.20">
    <property type="match status" value="1"/>
</dbReference>
<dbReference type="HAMAP" id="MF_01572">
    <property type="entry name" value="UPF0397"/>
    <property type="match status" value="1"/>
</dbReference>
<dbReference type="InterPro" id="IPR009825">
    <property type="entry name" value="ECF_substrate-spec-like"/>
</dbReference>
<dbReference type="InterPro" id="IPR022914">
    <property type="entry name" value="UPF0397"/>
</dbReference>
<dbReference type="NCBIfam" id="NF010182">
    <property type="entry name" value="PRK13661.1"/>
    <property type="match status" value="1"/>
</dbReference>
<dbReference type="PANTHER" id="PTHR37815">
    <property type="entry name" value="UPF0397 PROTEIN BC_2624-RELATED"/>
    <property type="match status" value="1"/>
</dbReference>
<dbReference type="PANTHER" id="PTHR37815:SF3">
    <property type="entry name" value="UPF0397 PROTEIN SPR0429"/>
    <property type="match status" value="1"/>
</dbReference>
<dbReference type="Pfam" id="PF07155">
    <property type="entry name" value="ECF-ribofla_trS"/>
    <property type="match status" value="1"/>
</dbReference>
<reference key="1">
    <citation type="journal article" date="2004" name="Nat. Biotechnol.">
        <title>Complete sequence and comparative genome analysis of the dairy bacterium Streptococcus thermophilus.</title>
        <authorList>
            <person name="Bolotin A."/>
            <person name="Quinquis B."/>
            <person name="Renault P."/>
            <person name="Sorokin A."/>
            <person name="Ehrlich S.D."/>
            <person name="Kulakauskas S."/>
            <person name="Lapidus A."/>
            <person name="Goltsman E."/>
            <person name="Mazur M."/>
            <person name="Pusch G.D."/>
            <person name="Fonstein M."/>
            <person name="Overbeek R."/>
            <person name="Kyprides N."/>
            <person name="Purnelle B."/>
            <person name="Prozzi D."/>
            <person name="Ngui K."/>
            <person name="Masuy D."/>
            <person name="Hancy F."/>
            <person name="Burteau S."/>
            <person name="Boutry M."/>
            <person name="Delcour J."/>
            <person name="Goffeau A."/>
            <person name="Hols P."/>
        </authorList>
    </citation>
    <scope>NUCLEOTIDE SEQUENCE [LARGE SCALE GENOMIC DNA]</scope>
    <source>
        <strain>ATCC BAA-250 / LMG 18311</strain>
    </source>
</reference>
<name>Y306_STRT2</name>
<keyword id="KW-1003">Cell membrane</keyword>
<keyword id="KW-0472">Membrane</keyword>
<keyword id="KW-1185">Reference proteome</keyword>
<keyword id="KW-0812">Transmembrane</keyword>
<keyword id="KW-1133">Transmembrane helix</keyword>
<sequence>MKNNSIRTVVATGIGAALFIIICIFVNIPIFGNTSIQLQYAVQVLFSVIFGSRSIIGFFMGFIGQVLKDGIQYGDISWAWVLASGITGLVIGLFGKKYDVTMGKFSVMSMIWFNLAQALGLLIAYGVVTPIGDKIQFAQAWSYLYAQSFVAGVANFITIAIGGTLLLAIYASSRTQSGSLTKG</sequence>
<comment type="subcellular location">
    <subcellularLocation>
        <location evidence="1">Cell membrane</location>
        <topology evidence="1">Multi-pass membrane protein</topology>
    </subcellularLocation>
</comment>
<comment type="similarity">
    <text evidence="1">Belongs to the UPF0397 family.</text>
</comment>
<comment type="sequence caution" evidence="2">
    <conflict type="erroneous termination">
        <sequence resource="EMBL-CDS" id="AAV60028"/>
    </conflict>
    <text>Truncated C-terminus.</text>
</comment>
<comment type="sequence caution" evidence="2">
    <conflict type="erroneous termination">
        <sequence resource="EMBL-CDS" id="AAV60029"/>
    </conflict>
    <text>Truncated C-terminus.</text>
</comment>
<feature type="chain" id="PRO_0000260817" description="UPF0397 protein stu0306/stu0307">
    <location>
        <begin position="1"/>
        <end position="183"/>
    </location>
</feature>
<feature type="transmembrane region" description="Helical" evidence="1">
    <location>
        <begin position="11"/>
        <end position="31"/>
    </location>
</feature>
<feature type="transmembrane region" description="Helical" evidence="1">
    <location>
        <begin position="44"/>
        <end position="64"/>
    </location>
</feature>
<feature type="transmembrane region" description="Helical" evidence="1">
    <location>
        <begin position="74"/>
        <end position="94"/>
    </location>
</feature>
<feature type="transmembrane region" description="Helical" evidence="1">
    <location>
        <begin position="111"/>
        <end position="131"/>
    </location>
</feature>
<feature type="transmembrane region" description="Helical" evidence="1">
    <location>
        <begin position="149"/>
        <end position="169"/>
    </location>
</feature>
<protein>
    <recommendedName>
        <fullName evidence="1">UPF0397 protein stu0306/stu0307</fullName>
    </recommendedName>
</protein>
<accession>Q5M5Y6</accession>
<accession>Q5M5Y7</accession>
<proteinExistence type="inferred from homology"/>
<evidence type="ECO:0000255" key="1">
    <source>
        <dbReference type="HAMAP-Rule" id="MF_01572"/>
    </source>
</evidence>
<evidence type="ECO:0000305" key="2"/>